<accession>Q5UP61</accession>
<feature type="chain" id="PRO_0000067181" description="Putative ankyrin repeat protein R602">
    <location>
        <begin position="1"/>
        <end position="304"/>
    </location>
</feature>
<feature type="repeat" description="ANK 1">
    <location>
        <begin position="82"/>
        <end position="117"/>
    </location>
</feature>
<feature type="repeat" description="ANK 2">
    <location>
        <begin position="118"/>
        <end position="146"/>
    </location>
</feature>
<feature type="repeat" description="ANK 3">
    <location>
        <begin position="147"/>
        <end position="176"/>
    </location>
</feature>
<feature type="repeat" description="ANK 4">
    <location>
        <begin position="178"/>
        <end position="206"/>
    </location>
</feature>
<feature type="repeat" description="ANK 5">
    <location>
        <begin position="207"/>
        <end position="236"/>
    </location>
</feature>
<feature type="repeat" description="ANK 6">
    <location>
        <begin position="238"/>
        <end position="266"/>
    </location>
</feature>
<gene>
    <name type="ordered locus">MIMI_R602</name>
</gene>
<sequence length="304" mass="34697">MDSVSKISRKINLFTKHIGTYSKINTSTTYYATVKLLVNNPCNIDQDTIFNLLEYSVIILDLDGFYQIIKHHNDIFRDNYRLIRYILYIAYQNHHQDCSVYYEMIKYLIDYGLDITFNDNFAIKLASLCHENILKLVIDNGGDVHADNEFPICLAANHGRLSCVKLLVDCGVDPFCFDNIVIKLASIDYYDNVVEYMVSIGADINAGNNYVLRYAIKNLDKKMIELAINAGASINDISPNDITHIIKYQSPTIMNILVEYGLDISTVNFCSKIRPERKKFVDNLISRGVDPTIIAYLSYACESD</sequence>
<proteinExistence type="predicted"/>
<organismHost>
    <name type="scientific">Acanthamoeba polyphaga</name>
    <name type="common">Amoeba</name>
    <dbReference type="NCBI Taxonomy" id="5757"/>
</organismHost>
<reference key="1">
    <citation type="journal article" date="2004" name="Science">
        <title>The 1.2-megabase genome sequence of Mimivirus.</title>
        <authorList>
            <person name="Raoult D."/>
            <person name="Audic S."/>
            <person name="Robert C."/>
            <person name="Abergel C."/>
            <person name="Renesto P."/>
            <person name="Ogata H."/>
            <person name="La Scola B."/>
            <person name="Susan M."/>
            <person name="Claverie J.-M."/>
        </authorList>
    </citation>
    <scope>NUCLEOTIDE SEQUENCE [LARGE SCALE GENOMIC DNA]</scope>
    <source>
        <strain>Rowbotham-Bradford</strain>
    </source>
</reference>
<name>YR602_MIMIV</name>
<dbReference type="EMBL" id="AY653733">
    <property type="protein sequence ID" value="AAV50865.1"/>
    <property type="molecule type" value="Genomic_DNA"/>
</dbReference>
<dbReference type="SMR" id="Q5UP61"/>
<dbReference type="KEGG" id="vg:9925239"/>
<dbReference type="OrthoDB" id="30451at10239"/>
<dbReference type="Proteomes" id="UP000001134">
    <property type="component" value="Genome"/>
</dbReference>
<dbReference type="Gene3D" id="1.25.40.20">
    <property type="entry name" value="Ankyrin repeat-containing domain"/>
    <property type="match status" value="1"/>
</dbReference>
<dbReference type="InterPro" id="IPR002110">
    <property type="entry name" value="Ankyrin_rpt"/>
</dbReference>
<dbReference type="InterPro" id="IPR036770">
    <property type="entry name" value="Ankyrin_rpt-contain_sf"/>
</dbReference>
<dbReference type="PANTHER" id="PTHR24126:SF14">
    <property type="entry name" value="ANK_REP_REGION DOMAIN-CONTAINING PROTEIN"/>
    <property type="match status" value="1"/>
</dbReference>
<dbReference type="PANTHER" id="PTHR24126">
    <property type="entry name" value="ANKYRIN REPEAT, PH AND SEC7 DOMAIN CONTAINING PROTEIN SECG-RELATED"/>
    <property type="match status" value="1"/>
</dbReference>
<dbReference type="Pfam" id="PF12796">
    <property type="entry name" value="Ank_2"/>
    <property type="match status" value="1"/>
</dbReference>
<dbReference type="SMART" id="SM00248">
    <property type="entry name" value="ANK"/>
    <property type="match status" value="5"/>
</dbReference>
<dbReference type="SUPFAM" id="SSF48403">
    <property type="entry name" value="Ankyrin repeat"/>
    <property type="match status" value="1"/>
</dbReference>
<keyword id="KW-0040">ANK repeat</keyword>
<keyword id="KW-1185">Reference proteome</keyword>
<keyword id="KW-0677">Repeat</keyword>
<organism>
    <name type="scientific">Acanthamoeba polyphaga mimivirus</name>
    <name type="common">APMV</name>
    <dbReference type="NCBI Taxonomy" id="212035"/>
    <lineage>
        <taxon>Viruses</taxon>
        <taxon>Varidnaviria</taxon>
        <taxon>Bamfordvirae</taxon>
        <taxon>Nucleocytoviricota</taxon>
        <taxon>Megaviricetes</taxon>
        <taxon>Imitervirales</taxon>
        <taxon>Mimiviridae</taxon>
        <taxon>Megamimivirinae</taxon>
        <taxon>Mimivirus</taxon>
        <taxon>Mimivirus bradfordmassiliense</taxon>
    </lineage>
</organism>
<protein>
    <recommendedName>
        <fullName>Putative ankyrin repeat protein R602</fullName>
    </recommendedName>
</protein>